<sequence length="120" mass="14026">MHNKIVRIASSALTGGKLLEKLKPLTRWEVQWDPNKTKCLGITREVTFKDYETTWAFLTRVSMRSHLWGHHPLIHTSYTWVKLELHTHDIDPKDGAHSQLSDIDVRMAKRIDSYIDEMTT</sequence>
<evidence type="ECO:0000269" key="1">
    <source>
    </source>
</evidence>
<evidence type="ECO:0000305" key="2"/>
<organism>
    <name type="scientific">Saccharomyces cerevisiae (strain ATCC 204508 / S288c)</name>
    <name type="common">Baker's yeast</name>
    <dbReference type="NCBI Taxonomy" id="559292"/>
    <lineage>
        <taxon>Eukaryota</taxon>
        <taxon>Fungi</taxon>
        <taxon>Dikarya</taxon>
        <taxon>Ascomycota</taxon>
        <taxon>Saccharomycotina</taxon>
        <taxon>Saccharomycetes</taxon>
        <taxon>Saccharomycetales</taxon>
        <taxon>Saccharomycetaceae</taxon>
        <taxon>Saccharomyces</taxon>
    </lineage>
</organism>
<proteinExistence type="evidence at protein level"/>
<gene>
    <name type="ordered locus">YHL018W</name>
</gene>
<feature type="chain" id="PRO_0000063064" description="Putative pterin-4-alpha-carbinolamine dehydratase">
    <location>
        <begin position="1"/>
        <end position="120"/>
    </location>
</feature>
<dbReference type="EC" id="4.2.1.96"/>
<dbReference type="EMBL" id="U11582">
    <property type="protein sequence ID" value="AAB65071.1"/>
    <property type="molecule type" value="Genomic_DNA"/>
</dbReference>
<dbReference type="EMBL" id="AY558391">
    <property type="protein sequence ID" value="AAS56717.1"/>
    <property type="molecule type" value="Genomic_DNA"/>
</dbReference>
<dbReference type="EMBL" id="BK006934">
    <property type="protein sequence ID" value="DAA06667.1"/>
    <property type="molecule type" value="Genomic_DNA"/>
</dbReference>
<dbReference type="PIR" id="S46832">
    <property type="entry name" value="S46832"/>
</dbReference>
<dbReference type="SMR" id="P38744"/>
<dbReference type="BioGRID" id="36405">
    <property type="interactions" value="96"/>
</dbReference>
<dbReference type="DIP" id="DIP-1872N"/>
<dbReference type="FunCoup" id="P38744">
    <property type="interactions" value="55"/>
</dbReference>
<dbReference type="IntAct" id="P38744">
    <property type="interactions" value="21"/>
</dbReference>
<dbReference type="MINT" id="P38744"/>
<dbReference type="STRING" id="4932.YHL018W"/>
<dbReference type="iPTMnet" id="P38744"/>
<dbReference type="PaxDb" id="4932-YHL018W"/>
<dbReference type="PeptideAtlas" id="P38744"/>
<dbReference type="EnsemblFungi" id="YHL018W_mRNA">
    <property type="protein sequence ID" value="YHL018W"/>
    <property type="gene ID" value="YHL018W"/>
</dbReference>
<dbReference type="KEGG" id="sce:YHL018W"/>
<dbReference type="AGR" id="SGD:S000001010"/>
<dbReference type="SGD" id="S000001010">
    <property type="gene designation" value="YHL018W"/>
</dbReference>
<dbReference type="VEuPathDB" id="FungiDB:YHL018W"/>
<dbReference type="eggNOG" id="KOG4073">
    <property type="taxonomic scope" value="Eukaryota"/>
</dbReference>
<dbReference type="HOGENOM" id="CLU_081974_4_0_1"/>
<dbReference type="InParanoid" id="P38744"/>
<dbReference type="OMA" id="IAMRSHL"/>
<dbReference type="OrthoDB" id="277398at2759"/>
<dbReference type="BioCyc" id="YEAST:G3O-31038-MONOMER"/>
<dbReference type="Reactome" id="R-SCE-8964208">
    <property type="pathway name" value="Phenylalanine metabolism"/>
</dbReference>
<dbReference type="BioGRID-ORCS" id="856368">
    <property type="hits" value="0 hits in 10 CRISPR screens"/>
</dbReference>
<dbReference type="PRO" id="PR:P38744"/>
<dbReference type="Proteomes" id="UP000002311">
    <property type="component" value="Chromosome VIII"/>
</dbReference>
<dbReference type="RNAct" id="P38744">
    <property type="molecule type" value="protein"/>
</dbReference>
<dbReference type="GO" id="GO:0005739">
    <property type="term" value="C:mitochondrion"/>
    <property type="evidence" value="ECO:0007005"/>
    <property type="project" value="SGD"/>
</dbReference>
<dbReference type="GO" id="GO:0008124">
    <property type="term" value="F:4-alpha-hydroxytetrahydrobiopterin dehydratase activity"/>
    <property type="evidence" value="ECO:0000318"/>
    <property type="project" value="GO_Central"/>
</dbReference>
<dbReference type="GO" id="GO:0006729">
    <property type="term" value="P:tetrahydrobiopterin biosynthetic process"/>
    <property type="evidence" value="ECO:0007669"/>
    <property type="project" value="InterPro"/>
</dbReference>
<dbReference type="CDD" id="cd00488">
    <property type="entry name" value="PCD_DCoH"/>
    <property type="match status" value="1"/>
</dbReference>
<dbReference type="Gene3D" id="3.30.1360.20">
    <property type="entry name" value="Transcriptional coactivator/pterin dehydratase"/>
    <property type="match status" value="1"/>
</dbReference>
<dbReference type="InterPro" id="IPR036428">
    <property type="entry name" value="PCD_sf"/>
</dbReference>
<dbReference type="InterPro" id="IPR001533">
    <property type="entry name" value="Pterin_deHydtase"/>
</dbReference>
<dbReference type="PANTHER" id="PTHR12599">
    <property type="entry name" value="PTERIN-4-ALPHA-CARBINOLAMINE DEHYDRATASE"/>
    <property type="match status" value="1"/>
</dbReference>
<dbReference type="PANTHER" id="PTHR12599:SF0">
    <property type="entry name" value="PTERIN-4-ALPHA-CARBINOLAMINE DEHYDRATASE"/>
    <property type="match status" value="1"/>
</dbReference>
<dbReference type="Pfam" id="PF01329">
    <property type="entry name" value="Pterin_4a"/>
    <property type="match status" value="1"/>
</dbReference>
<dbReference type="SUPFAM" id="SSF55248">
    <property type="entry name" value="PCD-like"/>
    <property type="match status" value="1"/>
</dbReference>
<name>PHS_YEAST</name>
<keyword id="KW-0456">Lyase</keyword>
<keyword id="KW-1185">Reference proteome</keyword>
<comment type="catalytic activity">
    <reaction>
        <text>(4aS,6R)-4a-hydroxy-L-erythro-5,6,7,8-tetrahydrobiopterin = (6R)-L-erythro-6,7-dihydrobiopterin + H2O</text>
        <dbReference type="Rhea" id="RHEA:11920"/>
        <dbReference type="ChEBI" id="CHEBI:15377"/>
        <dbReference type="ChEBI" id="CHEBI:15642"/>
        <dbReference type="ChEBI" id="CHEBI:43120"/>
        <dbReference type="EC" id="4.2.1.96"/>
    </reaction>
</comment>
<comment type="miscellaneous">
    <text evidence="1">Present with 752 molecules/cell in log phase SD medium.</text>
</comment>
<comment type="similarity">
    <text evidence="2">Belongs to the pterin-4-alpha-carbinolamine dehydratase family.</text>
</comment>
<reference key="1">
    <citation type="journal article" date="1994" name="Science">
        <title>Complete nucleotide sequence of Saccharomyces cerevisiae chromosome VIII.</title>
        <authorList>
            <person name="Johnston M."/>
            <person name="Andrews S."/>
            <person name="Brinkman R."/>
            <person name="Cooper J."/>
            <person name="Ding H."/>
            <person name="Dover J."/>
            <person name="Du Z."/>
            <person name="Favello A."/>
            <person name="Fulton L."/>
            <person name="Gattung S."/>
            <person name="Geisel C."/>
            <person name="Kirsten J."/>
            <person name="Kucaba T."/>
            <person name="Hillier L.W."/>
            <person name="Jier M."/>
            <person name="Johnston L."/>
            <person name="Langston Y."/>
            <person name="Latreille P."/>
            <person name="Louis E.J."/>
            <person name="Macri C."/>
            <person name="Mardis E."/>
            <person name="Menezes S."/>
            <person name="Mouser L."/>
            <person name="Nhan M."/>
            <person name="Rifkin L."/>
            <person name="Riles L."/>
            <person name="St Peter H."/>
            <person name="Trevaskis E."/>
            <person name="Vaughan K."/>
            <person name="Vignati D."/>
            <person name="Wilcox L."/>
            <person name="Wohldman P."/>
            <person name="Waterston R."/>
            <person name="Wilson R."/>
            <person name="Vaudin M."/>
        </authorList>
    </citation>
    <scope>NUCLEOTIDE SEQUENCE [LARGE SCALE GENOMIC DNA]</scope>
    <source>
        <strain>ATCC 204508 / S288c</strain>
    </source>
</reference>
<reference key="2">
    <citation type="journal article" date="2014" name="G3 (Bethesda)">
        <title>The reference genome sequence of Saccharomyces cerevisiae: Then and now.</title>
        <authorList>
            <person name="Engel S.R."/>
            <person name="Dietrich F.S."/>
            <person name="Fisk D.G."/>
            <person name="Binkley G."/>
            <person name="Balakrishnan R."/>
            <person name="Costanzo M.C."/>
            <person name="Dwight S.S."/>
            <person name="Hitz B.C."/>
            <person name="Karra K."/>
            <person name="Nash R.S."/>
            <person name="Weng S."/>
            <person name="Wong E.D."/>
            <person name="Lloyd P."/>
            <person name="Skrzypek M.S."/>
            <person name="Miyasato S.R."/>
            <person name="Simison M."/>
            <person name="Cherry J.M."/>
        </authorList>
    </citation>
    <scope>GENOME REANNOTATION</scope>
    <source>
        <strain>ATCC 204508 / S288c</strain>
    </source>
</reference>
<reference key="3">
    <citation type="journal article" date="2007" name="Genome Res.">
        <title>Approaching a complete repository of sequence-verified protein-encoding clones for Saccharomyces cerevisiae.</title>
        <authorList>
            <person name="Hu Y."/>
            <person name="Rolfs A."/>
            <person name="Bhullar B."/>
            <person name="Murthy T.V.S."/>
            <person name="Zhu C."/>
            <person name="Berger M.F."/>
            <person name="Camargo A.A."/>
            <person name="Kelley F."/>
            <person name="McCarron S."/>
            <person name="Jepson D."/>
            <person name="Richardson A."/>
            <person name="Raphael J."/>
            <person name="Moreira D."/>
            <person name="Taycher E."/>
            <person name="Zuo D."/>
            <person name="Mohr S."/>
            <person name="Kane M.F."/>
            <person name="Williamson J."/>
            <person name="Simpson A.J.G."/>
            <person name="Bulyk M.L."/>
            <person name="Harlow E."/>
            <person name="Marsischky G."/>
            <person name="Kolodner R.D."/>
            <person name="LaBaer J."/>
        </authorList>
    </citation>
    <scope>NUCLEOTIDE SEQUENCE [GENOMIC DNA]</scope>
    <source>
        <strain>ATCC 204508 / S288c</strain>
    </source>
</reference>
<reference key="4">
    <citation type="journal article" date="2003" name="Nature">
        <title>Global analysis of protein expression in yeast.</title>
        <authorList>
            <person name="Ghaemmaghami S."/>
            <person name="Huh W.-K."/>
            <person name="Bower K."/>
            <person name="Howson R.W."/>
            <person name="Belle A."/>
            <person name="Dephoure N."/>
            <person name="O'Shea E.K."/>
            <person name="Weissman J.S."/>
        </authorList>
    </citation>
    <scope>LEVEL OF PROTEIN EXPRESSION [LARGE SCALE ANALYSIS]</scope>
</reference>
<protein>
    <recommendedName>
        <fullName>Putative pterin-4-alpha-carbinolamine dehydratase</fullName>
        <shortName>PHS</shortName>
        <ecNumber>4.2.1.96</ecNumber>
    </recommendedName>
    <alternativeName>
        <fullName>4-alpha-hydroxy-tetrahydropterin dehydratase</fullName>
    </alternativeName>
    <alternativeName>
        <fullName>Pterin carbinolamine dehydratase</fullName>
        <shortName>PCD</shortName>
    </alternativeName>
</protein>
<accession>P38744</accession>
<accession>D3DKR5</accession>